<keyword id="KW-0032">Aminotransferase</keyword>
<keyword id="KW-0663">Pyridoxal phosphate</keyword>
<keyword id="KW-1185">Reference proteome</keyword>
<keyword id="KW-0808">Transferase</keyword>
<gene>
    <name evidence="1" type="primary">pat</name>
    <name type="ordered locus">jk2030</name>
</gene>
<accession>Q4JSJ5</accession>
<sequence>MIRPDLSSLPAYVPGSTQPGALKLASNESSLSPLPSVSAVINDATSNLNRYPDMASGALRGKLAQWLGVDLDNVAVGNGSSALCQQLVQATCKDGDEVVYAWRSFEAYPILCKIAGAVGVGVPLKSGRHDLKAMSEAIGERTRLVFVCNPNNPTGTTVSRDEFREFMGRVPADVTVVLDEAYVEYNRDAESPVALEELQRYPNLAVCRTFSKAYGLAGLRLGYLVGPAELVEAVNKVGIPFGVNALAQAAGIASVEAQGELAERVDATVAERERVEAYLAGVAPAGADEPLTYPSQANFVWLNAGERAEALDEALKREGVIARCFAGEGVRVTVTTAEETDVLLRALERALPAVGLVEAGAESAGLQASPQAD</sequence>
<feature type="chain" id="PRO_0000153513" description="Aromatic amino acid aminotransferase">
    <location>
        <begin position="1"/>
        <end position="373"/>
    </location>
</feature>
<feature type="modified residue" description="N6-(pyridoxal phosphate)lysine" evidence="1">
    <location>
        <position position="212"/>
    </location>
</feature>
<comment type="function">
    <text evidence="1">Aminotransferase that catalyzes the conversion of aromatic amino acids and 2-oxoglutarate into corresponding aromatic oxo acids and L-glutamate.</text>
</comment>
<comment type="catalytic activity">
    <reaction evidence="1">
        <text>an aromatic L-alpha-amino acid + 2-oxoglutarate = an aromatic oxo-acid + L-glutamate</text>
        <dbReference type="Rhea" id="RHEA:17533"/>
        <dbReference type="ChEBI" id="CHEBI:16810"/>
        <dbReference type="ChEBI" id="CHEBI:29985"/>
        <dbReference type="ChEBI" id="CHEBI:73309"/>
        <dbReference type="ChEBI" id="CHEBI:84824"/>
        <dbReference type="EC" id="2.6.1.57"/>
    </reaction>
</comment>
<comment type="cofactor">
    <cofactor evidence="1">
        <name>pyridoxal 5'-phosphate</name>
        <dbReference type="ChEBI" id="CHEBI:597326"/>
    </cofactor>
</comment>
<comment type="subunit">
    <text evidence="1">Homodimer.</text>
</comment>
<comment type="similarity">
    <text evidence="1">Belongs to the class-II pyridoxal-phosphate-dependent aminotransferase family.</text>
</comment>
<name>PATR_CORJK</name>
<reference key="1">
    <citation type="journal article" date="2005" name="J. Bacteriol.">
        <title>Complete genome sequence and analysis of the multiresistant nosocomial pathogen Corynebacterium jeikeium K411, a lipid-requiring bacterium of the human skin flora.</title>
        <authorList>
            <person name="Tauch A."/>
            <person name="Kaiser O."/>
            <person name="Hain T."/>
            <person name="Goesmann A."/>
            <person name="Weisshaar B."/>
            <person name="Albersmeier A."/>
            <person name="Bekel T."/>
            <person name="Bischoff N."/>
            <person name="Brune I."/>
            <person name="Chakraborty T."/>
            <person name="Kalinowski J."/>
            <person name="Meyer F."/>
            <person name="Rupp O."/>
            <person name="Schneiker S."/>
            <person name="Viehoever P."/>
            <person name="Puehler A."/>
        </authorList>
    </citation>
    <scope>NUCLEOTIDE SEQUENCE [LARGE SCALE GENOMIC DNA]</scope>
    <source>
        <strain>K411</strain>
    </source>
</reference>
<evidence type="ECO:0000255" key="1">
    <source>
        <dbReference type="HAMAP-Rule" id="MF_01513"/>
    </source>
</evidence>
<organism>
    <name type="scientific">Corynebacterium jeikeium (strain K411)</name>
    <dbReference type="NCBI Taxonomy" id="306537"/>
    <lineage>
        <taxon>Bacteria</taxon>
        <taxon>Bacillati</taxon>
        <taxon>Actinomycetota</taxon>
        <taxon>Actinomycetes</taxon>
        <taxon>Mycobacteriales</taxon>
        <taxon>Corynebacteriaceae</taxon>
        <taxon>Corynebacterium</taxon>
    </lineage>
</organism>
<dbReference type="EC" id="2.6.1.57" evidence="1"/>
<dbReference type="EMBL" id="CR931997">
    <property type="protein sequence ID" value="CAI38212.1"/>
    <property type="molecule type" value="Genomic_DNA"/>
</dbReference>
<dbReference type="RefSeq" id="WP_011274301.1">
    <property type="nucleotide sequence ID" value="NC_007164.1"/>
</dbReference>
<dbReference type="SMR" id="Q4JSJ5"/>
<dbReference type="STRING" id="306537.jk2030"/>
<dbReference type="KEGG" id="cjk:jk2030"/>
<dbReference type="PATRIC" id="fig|306537.10.peg.2062"/>
<dbReference type="eggNOG" id="COG0079">
    <property type="taxonomic scope" value="Bacteria"/>
</dbReference>
<dbReference type="HOGENOM" id="CLU_017584_3_3_11"/>
<dbReference type="OrthoDB" id="9809616at2"/>
<dbReference type="Proteomes" id="UP000000545">
    <property type="component" value="Chromosome"/>
</dbReference>
<dbReference type="GO" id="GO:0008793">
    <property type="term" value="F:aromatic-amino-acid transaminase activity"/>
    <property type="evidence" value="ECO:0007669"/>
    <property type="project" value="UniProtKB-UniRule"/>
</dbReference>
<dbReference type="GO" id="GO:0004400">
    <property type="term" value="F:histidinol-phosphate transaminase activity"/>
    <property type="evidence" value="ECO:0007669"/>
    <property type="project" value="InterPro"/>
</dbReference>
<dbReference type="GO" id="GO:0030170">
    <property type="term" value="F:pyridoxal phosphate binding"/>
    <property type="evidence" value="ECO:0007669"/>
    <property type="project" value="UniProtKB-UniRule"/>
</dbReference>
<dbReference type="GO" id="GO:0000105">
    <property type="term" value="P:L-histidine biosynthetic process"/>
    <property type="evidence" value="ECO:0007669"/>
    <property type="project" value="InterPro"/>
</dbReference>
<dbReference type="CDD" id="cd00609">
    <property type="entry name" value="AAT_like"/>
    <property type="match status" value="1"/>
</dbReference>
<dbReference type="Gene3D" id="3.90.1150.10">
    <property type="entry name" value="Aspartate Aminotransferase, domain 1"/>
    <property type="match status" value="1"/>
</dbReference>
<dbReference type="Gene3D" id="3.40.640.10">
    <property type="entry name" value="Type I PLP-dependent aspartate aminotransferase-like (Major domain)"/>
    <property type="match status" value="1"/>
</dbReference>
<dbReference type="HAMAP" id="MF_01023">
    <property type="entry name" value="HisC_aminotrans_2"/>
    <property type="match status" value="1"/>
</dbReference>
<dbReference type="HAMAP" id="MF_01513">
    <property type="entry name" value="Phe_aminotrans_2"/>
    <property type="match status" value="1"/>
</dbReference>
<dbReference type="InterPro" id="IPR001917">
    <property type="entry name" value="Aminotrans_II_pyridoxalP_BS"/>
</dbReference>
<dbReference type="InterPro" id="IPR004839">
    <property type="entry name" value="Aminotransferase_I/II_large"/>
</dbReference>
<dbReference type="InterPro" id="IPR024892">
    <property type="entry name" value="ArAT"/>
</dbReference>
<dbReference type="InterPro" id="IPR005861">
    <property type="entry name" value="HisP_aminotrans"/>
</dbReference>
<dbReference type="InterPro" id="IPR050106">
    <property type="entry name" value="HistidinolP_aminotransfase"/>
</dbReference>
<dbReference type="InterPro" id="IPR015424">
    <property type="entry name" value="PyrdxlP-dep_Trfase"/>
</dbReference>
<dbReference type="InterPro" id="IPR015421">
    <property type="entry name" value="PyrdxlP-dep_Trfase_major"/>
</dbReference>
<dbReference type="InterPro" id="IPR015422">
    <property type="entry name" value="PyrdxlP-dep_Trfase_small"/>
</dbReference>
<dbReference type="NCBIfam" id="TIGR01141">
    <property type="entry name" value="hisC"/>
    <property type="match status" value="1"/>
</dbReference>
<dbReference type="NCBIfam" id="NF002878">
    <property type="entry name" value="PRK03321.1"/>
    <property type="match status" value="1"/>
</dbReference>
<dbReference type="PANTHER" id="PTHR43643:SF3">
    <property type="entry name" value="HISTIDINOL-PHOSPHATE AMINOTRANSFERASE"/>
    <property type="match status" value="1"/>
</dbReference>
<dbReference type="PANTHER" id="PTHR43643">
    <property type="entry name" value="HISTIDINOL-PHOSPHATE AMINOTRANSFERASE 2"/>
    <property type="match status" value="1"/>
</dbReference>
<dbReference type="Pfam" id="PF00155">
    <property type="entry name" value="Aminotran_1_2"/>
    <property type="match status" value="1"/>
</dbReference>
<dbReference type="SUPFAM" id="SSF53383">
    <property type="entry name" value="PLP-dependent transferases"/>
    <property type="match status" value="1"/>
</dbReference>
<dbReference type="PROSITE" id="PS00599">
    <property type="entry name" value="AA_TRANSFER_CLASS_2"/>
    <property type="match status" value="1"/>
</dbReference>
<proteinExistence type="inferred from homology"/>
<protein>
    <recommendedName>
        <fullName evidence="1">Aromatic amino acid aminotransferase</fullName>
        <shortName evidence="1">ArAT</shortName>
        <ecNumber evidence="1">2.6.1.57</ecNumber>
    </recommendedName>
</protein>